<comment type="function">
    <text evidence="3">Transfers the 4'-phosphopantetheine moiety from coenzyme A to a Ser of fatty acid acyl-carrier-protein ACP. Also modifies the D-alanyl carrier protein but fails to recognize PCP and AcpK, an acyl carrier protein of secondary metabolism.</text>
</comment>
<comment type="catalytic activity">
    <reaction evidence="1 3">
        <text>apo-[ACP] + CoA = holo-[ACP] + adenosine 3',5'-bisphosphate + H(+)</text>
        <dbReference type="Rhea" id="RHEA:12068"/>
        <dbReference type="Rhea" id="RHEA-COMP:9685"/>
        <dbReference type="Rhea" id="RHEA-COMP:9690"/>
        <dbReference type="ChEBI" id="CHEBI:15378"/>
        <dbReference type="ChEBI" id="CHEBI:29999"/>
        <dbReference type="ChEBI" id="CHEBI:57287"/>
        <dbReference type="ChEBI" id="CHEBI:58343"/>
        <dbReference type="ChEBI" id="CHEBI:64479"/>
        <dbReference type="EC" id="2.7.8.7"/>
    </reaction>
</comment>
<comment type="cofactor">
    <cofactor evidence="1">
        <name>Mg(2+)</name>
        <dbReference type="ChEBI" id="CHEBI:18420"/>
    </cofactor>
</comment>
<comment type="subunit">
    <text evidence="2">Homotrimer.</text>
</comment>
<comment type="subcellular location">
    <subcellularLocation>
        <location evidence="1">Cytoplasm</location>
    </subcellularLocation>
</comment>
<comment type="similarity">
    <text evidence="1">Belongs to the P-Pant transferase superfamily. AcpS family.</text>
</comment>
<name>ACPS_BACSU</name>
<keyword id="KW-0002">3D-structure</keyword>
<keyword id="KW-0963">Cytoplasm</keyword>
<keyword id="KW-0275">Fatty acid biosynthesis</keyword>
<keyword id="KW-0276">Fatty acid metabolism</keyword>
<keyword id="KW-0444">Lipid biosynthesis</keyword>
<keyword id="KW-0443">Lipid metabolism</keyword>
<keyword id="KW-0460">Magnesium</keyword>
<keyword id="KW-0479">Metal-binding</keyword>
<keyword id="KW-1185">Reference proteome</keyword>
<keyword id="KW-0808">Transferase</keyword>
<organism>
    <name type="scientific">Bacillus subtilis (strain 168)</name>
    <dbReference type="NCBI Taxonomy" id="224308"/>
    <lineage>
        <taxon>Bacteria</taxon>
        <taxon>Bacillati</taxon>
        <taxon>Bacillota</taxon>
        <taxon>Bacilli</taxon>
        <taxon>Bacillales</taxon>
        <taxon>Bacillaceae</taxon>
        <taxon>Bacillus</taxon>
    </lineage>
</organism>
<feature type="chain" id="PRO_0000175613" description="Holo-[acyl-carrier-protein] synthase">
    <location>
        <begin position="1"/>
        <end position="121"/>
    </location>
</feature>
<feature type="binding site">
    <location>
        <position position="8"/>
    </location>
    <ligand>
        <name>Mg(2+)</name>
        <dbReference type="ChEBI" id="CHEBI:18420"/>
    </ligand>
</feature>
<feature type="binding site">
    <location>
        <position position="58"/>
    </location>
    <ligand>
        <name>Mg(2+)</name>
        <dbReference type="ChEBI" id="CHEBI:18420"/>
    </ligand>
</feature>
<feature type="mutagenesis site" description="6% of wild-type activity." evidence="2">
    <original>I</original>
    <variation>A</variation>
    <location>
        <position position="2"/>
    </location>
</feature>
<feature type="mutagenesis site" description="Loss of activity; no trimer formation." evidence="2">
    <original>I</original>
    <variation>R</variation>
    <location>
        <position position="5"/>
    </location>
</feature>
<feature type="mutagenesis site" description="14% of wild-type activity." evidence="2">
    <original>Q</original>
    <variation>E</variation>
    <location>
        <position position="113"/>
    </location>
</feature>
<feature type="mutagenesis site" description="Loss of activity; no trimer formation." evidence="2">
    <original>Q</original>
    <variation>R</variation>
    <location>
        <position position="113"/>
    </location>
</feature>
<feature type="strand" evidence="4">
    <location>
        <begin position="2"/>
        <end position="11"/>
    </location>
</feature>
<feature type="helix" evidence="4">
    <location>
        <begin position="12"/>
        <end position="21"/>
    </location>
</feature>
<feature type="helix" evidence="4">
    <location>
        <begin position="25"/>
        <end position="29"/>
    </location>
</feature>
<feature type="helix" evidence="4">
    <location>
        <begin position="32"/>
        <end position="38"/>
    </location>
</feature>
<feature type="helix" evidence="4">
    <location>
        <begin position="43"/>
        <end position="63"/>
    </location>
</feature>
<feature type="strand" evidence="5">
    <location>
        <begin position="68"/>
        <end position="71"/>
    </location>
</feature>
<feature type="helix" evidence="4">
    <location>
        <begin position="74"/>
        <end position="76"/>
    </location>
</feature>
<feature type="strand" evidence="4">
    <location>
        <begin position="78"/>
        <end position="81"/>
    </location>
</feature>
<feature type="strand" evidence="4">
    <location>
        <begin position="87"/>
        <end position="91"/>
    </location>
</feature>
<feature type="turn" evidence="4">
    <location>
        <begin position="92"/>
        <end position="94"/>
    </location>
</feature>
<feature type="strand" evidence="4">
    <location>
        <begin position="95"/>
        <end position="105"/>
    </location>
</feature>
<feature type="strand" evidence="4">
    <location>
        <begin position="107"/>
        <end position="117"/>
    </location>
</feature>
<reference key="1">
    <citation type="submission" date="1997-03" db="EMBL/GenBank/DDBJ databases">
        <title>A 148 kbp sequence of the region between 35 and 47 degree of the Bacillus subtilis genome.</title>
        <authorList>
            <person name="Kasahara Y."/>
            <person name="Nakai S."/>
            <person name="Lee S."/>
            <person name="Sadaie Y."/>
            <person name="Ogasawara N."/>
        </authorList>
    </citation>
    <scope>NUCLEOTIDE SEQUENCE [GENOMIC DNA]</scope>
    <source>
        <strain>168</strain>
    </source>
</reference>
<reference key="2">
    <citation type="journal article" date="1997" name="Nature">
        <title>The complete genome sequence of the Gram-positive bacterium Bacillus subtilis.</title>
        <authorList>
            <person name="Kunst F."/>
            <person name="Ogasawara N."/>
            <person name="Moszer I."/>
            <person name="Albertini A.M."/>
            <person name="Alloni G."/>
            <person name="Azevedo V."/>
            <person name="Bertero M.G."/>
            <person name="Bessieres P."/>
            <person name="Bolotin A."/>
            <person name="Borchert S."/>
            <person name="Borriss R."/>
            <person name="Boursier L."/>
            <person name="Brans A."/>
            <person name="Braun M."/>
            <person name="Brignell S.C."/>
            <person name="Bron S."/>
            <person name="Brouillet S."/>
            <person name="Bruschi C.V."/>
            <person name="Caldwell B."/>
            <person name="Capuano V."/>
            <person name="Carter N.M."/>
            <person name="Choi S.-K."/>
            <person name="Codani J.-J."/>
            <person name="Connerton I.F."/>
            <person name="Cummings N.J."/>
            <person name="Daniel R.A."/>
            <person name="Denizot F."/>
            <person name="Devine K.M."/>
            <person name="Duesterhoeft A."/>
            <person name="Ehrlich S.D."/>
            <person name="Emmerson P.T."/>
            <person name="Entian K.-D."/>
            <person name="Errington J."/>
            <person name="Fabret C."/>
            <person name="Ferrari E."/>
            <person name="Foulger D."/>
            <person name="Fritz C."/>
            <person name="Fujita M."/>
            <person name="Fujita Y."/>
            <person name="Fuma S."/>
            <person name="Galizzi A."/>
            <person name="Galleron N."/>
            <person name="Ghim S.-Y."/>
            <person name="Glaser P."/>
            <person name="Goffeau A."/>
            <person name="Golightly E.J."/>
            <person name="Grandi G."/>
            <person name="Guiseppi G."/>
            <person name="Guy B.J."/>
            <person name="Haga K."/>
            <person name="Haiech J."/>
            <person name="Harwood C.R."/>
            <person name="Henaut A."/>
            <person name="Hilbert H."/>
            <person name="Holsappel S."/>
            <person name="Hosono S."/>
            <person name="Hullo M.-F."/>
            <person name="Itaya M."/>
            <person name="Jones L.-M."/>
            <person name="Joris B."/>
            <person name="Karamata D."/>
            <person name="Kasahara Y."/>
            <person name="Klaerr-Blanchard M."/>
            <person name="Klein C."/>
            <person name="Kobayashi Y."/>
            <person name="Koetter P."/>
            <person name="Koningstein G."/>
            <person name="Krogh S."/>
            <person name="Kumano M."/>
            <person name="Kurita K."/>
            <person name="Lapidus A."/>
            <person name="Lardinois S."/>
            <person name="Lauber J."/>
            <person name="Lazarevic V."/>
            <person name="Lee S.-M."/>
            <person name="Levine A."/>
            <person name="Liu H."/>
            <person name="Masuda S."/>
            <person name="Mauel C."/>
            <person name="Medigue C."/>
            <person name="Medina N."/>
            <person name="Mellado R.P."/>
            <person name="Mizuno M."/>
            <person name="Moestl D."/>
            <person name="Nakai S."/>
            <person name="Noback M."/>
            <person name="Noone D."/>
            <person name="O'Reilly M."/>
            <person name="Ogawa K."/>
            <person name="Ogiwara A."/>
            <person name="Oudega B."/>
            <person name="Park S.-H."/>
            <person name="Parro V."/>
            <person name="Pohl T.M."/>
            <person name="Portetelle D."/>
            <person name="Porwollik S."/>
            <person name="Prescott A.M."/>
            <person name="Presecan E."/>
            <person name="Pujic P."/>
            <person name="Purnelle B."/>
            <person name="Rapoport G."/>
            <person name="Rey M."/>
            <person name="Reynolds S."/>
            <person name="Rieger M."/>
            <person name="Rivolta C."/>
            <person name="Rocha E."/>
            <person name="Roche B."/>
            <person name="Rose M."/>
            <person name="Sadaie Y."/>
            <person name="Sato T."/>
            <person name="Scanlan E."/>
            <person name="Schleich S."/>
            <person name="Schroeter R."/>
            <person name="Scoffone F."/>
            <person name="Sekiguchi J."/>
            <person name="Sekowska A."/>
            <person name="Seror S.J."/>
            <person name="Serror P."/>
            <person name="Shin B.-S."/>
            <person name="Soldo B."/>
            <person name="Sorokin A."/>
            <person name="Tacconi E."/>
            <person name="Takagi T."/>
            <person name="Takahashi H."/>
            <person name="Takemaru K."/>
            <person name="Takeuchi M."/>
            <person name="Tamakoshi A."/>
            <person name="Tanaka T."/>
            <person name="Terpstra P."/>
            <person name="Tognoni A."/>
            <person name="Tosato V."/>
            <person name="Uchiyama S."/>
            <person name="Vandenbol M."/>
            <person name="Vannier F."/>
            <person name="Vassarotti A."/>
            <person name="Viari A."/>
            <person name="Wambutt R."/>
            <person name="Wedler E."/>
            <person name="Wedler H."/>
            <person name="Weitzenegger T."/>
            <person name="Winters P."/>
            <person name="Wipat A."/>
            <person name="Yamamoto H."/>
            <person name="Yamane K."/>
            <person name="Yasumoto K."/>
            <person name="Yata K."/>
            <person name="Yoshida K."/>
            <person name="Yoshikawa H.-F."/>
            <person name="Zumstein E."/>
            <person name="Yoshikawa H."/>
            <person name="Danchin A."/>
        </authorList>
    </citation>
    <scope>NUCLEOTIDE SEQUENCE [LARGE SCALE GENOMIC DNA]</scope>
    <source>
        <strain>168</strain>
    </source>
</reference>
<reference key="3">
    <citation type="journal article" date="2001" name="J. Biol. Chem.">
        <title>4'-phosphopantetheine transfer in primary and secondary metabolism of Bacillus subtilis.</title>
        <authorList>
            <person name="Mootz H.D."/>
            <person name="Finking R."/>
            <person name="Marahiel M.A."/>
        </authorList>
    </citation>
    <scope>FUNCTION</scope>
    <scope>CATALYTIC ACTIVITY</scope>
</reference>
<reference key="4">
    <citation type="journal article" date="2000" name="Structure">
        <title>Crystal structures of substrate binding to Bacillus subtilis holo-(acyl carrier protein) synthase reveal a novel trimeric arrangement of molecules resulting in three active sites.</title>
        <authorList>
            <person name="Parris K.D."/>
            <person name="Lin L."/>
            <person name="Tam A."/>
            <person name="Mathew R."/>
            <person name="Hixon J."/>
            <person name="Stahl M."/>
            <person name="Fritz C.C."/>
            <person name="Seehra J."/>
            <person name="Somers W.S."/>
        </authorList>
    </citation>
    <scope>MUTAGENESIS OF ILE-2; ILE-5 AND GLN-113</scope>
    <scope>X-RAY CRYSTALLOGRAPHY (1.5 ANGSTROMS) OF NATIVE PROTEIN AND COMPLEXES WITH COENZYME A AND WITH HOLO-(ACYL-CARRIER-PROTEIN)</scope>
    <scope>SUBUNIT</scope>
</reference>
<evidence type="ECO:0000255" key="1">
    <source>
        <dbReference type="HAMAP-Rule" id="MF_00101"/>
    </source>
</evidence>
<evidence type="ECO:0000269" key="2">
    <source>
    </source>
</evidence>
<evidence type="ECO:0000269" key="3">
    <source>
    </source>
</evidence>
<evidence type="ECO:0007829" key="4">
    <source>
        <dbReference type="PDB" id="1F7L"/>
    </source>
</evidence>
<evidence type="ECO:0007829" key="5">
    <source>
        <dbReference type="PDB" id="1F80"/>
    </source>
</evidence>
<dbReference type="EC" id="2.7.8.7" evidence="1"/>
<dbReference type="EMBL" id="AB001488">
    <property type="protein sequence ID" value="BAA19299.1"/>
    <property type="molecule type" value="Genomic_DNA"/>
</dbReference>
<dbReference type="EMBL" id="AL009126">
    <property type="protein sequence ID" value="CAB12269.1"/>
    <property type="molecule type" value="Genomic_DNA"/>
</dbReference>
<dbReference type="PIR" id="H69772">
    <property type="entry name" value="H69772"/>
</dbReference>
<dbReference type="RefSeq" id="NP_388343.1">
    <property type="nucleotide sequence ID" value="NC_000964.3"/>
</dbReference>
<dbReference type="RefSeq" id="WP_003234281.1">
    <property type="nucleotide sequence ID" value="NZ_OZ025638.1"/>
</dbReference>
<dbReference type="PDB" id="1F7L">
    <property type="method" value="X-ray"/>
    <property type="resolution" value="1.50 A"/>
    <property type="chains" value="A=1-121"/>
</dbReference>
<dbReference type="PDB" id="1F7T">
    <property type="method" value="X-ray"/>
    <property type="resolution" value="1.80 A"/>
    <property type="chains" value="A/B/C/D/E/F=2-121"/>
</dbReference>
<dbReference type="PDB" id="1F80">
    <property type="method" value="X-ray"/>
    <property type="resolution" value="2.30 A"/>
    <property type="chains" value="A/B/C=2-121"/>
</dbReference>
<dbReference type="PDBsum" id="1F7L"/>
<dbReference type="PDBsum" id="1F7T"/>
<dbReference type="PDBsum" id="1F80"/>
<dbReference type="SMR" id="P96618"/>
<dbReference type="FunCoup" id="P96618">
    <property type="interactions" value="195"/>
</dbReference>
<dbReference type="IntAct" id="P96618">
    <property type="interactions" value="1"/>
</dbReference>
<dbReference type="STRING" id="224308.BSU04620"/>
<dbReference type="BindingDB" id="P96618"/>
<dbReference type="ChEMBL" id="CHEMBL4734"/>
<dbReference type="DrugBank" id="DB04447">
    <property type="generic name" value="1,4-Dithiothreitol"/>
</dbReference>
<dbReference type="DrugBank" id="DB01992">
    <property type="generic name" value="Coenzyme A"/>
</dbReference>
<dbReference type="DrugCentral" id="P96618"/>
<dbReference type="PaxDb" id="224308-BSU04620"/>
<dbReference type="EnsemblBacteria" id="CAB12269">
    <property type="protein sequence ID" value="CAB12269"/>
    <property type="gene ID" value="BSU_04620"/>
</dbReference>
<dbReference type="GeneID" id="938194"/>
<dbReference type="KEGG" id="bsu:BSU04620"/>
<dbReference type="PATRIC" id="fig|224308.179.peg.490"/>
<dbReference type="eggNOG" id="COG0736">
    <property type="taxonomic scope" value="Bacteria"/>
</dbReference>
<dbReference type="InParanoid" id="P96618"/>
<dbReference type="OrthoDB" id="517356at2"/>
<dbReference type="PhylomeDB" id="P96618"/>
<dbReference type="BioCyc" id="BSUB:BSU04620-MONOMER"/>
<dbReference type="SABIO-RK" id="P96618"/>
<dbReference type="EvolutionaryTrace" id="P96618"/>
<dbReference type="Proteomes" id="UP000001570">
    <property type="component" value="Chromosome"/>
</dbReference>
<dbReference type="GO" id="GO:0005829">
    <property type="term" value="C:cytosol"/>
    <property type="evidence" value="ECO:0000318"/>
    <property type="project" value="GO_Central"/>
</dbReference>
<dbReference type="GO" id="GO:0008897">
    <property type="term" value="F:holo-[acyl-carrier-protein] synthase activity"/>
    <property type="evidence" value="ECO:0000318"/>
    <property type="project" value="GO_Central"/>
</dbReference>
<dbReference type="GO" id="GO:0000287">
    <property type="term" value="F:magnesium ion binding"/>
    <property type="evidence" value="ECO:0007669"/>
    <property type="project" value="UniProtKB-UniRule"/>
</dbReference>
<dbReference type="GO" id="GO:0006633">
    <property type="term" value="P:fatty acid biosynthetic process"/>
    <property type="evidence" value="ECO:0007669"/>
    <property type="project" value="UniProtKB-UniRule"/>
</dbReference>
<dbReference type="GO" id="GO:0019878">
    <property type="term" value="P:lysine biosynthetic process via aminoadipic acid"/>
    <property type="evidence" value="ECO:0000318"/>
    <property type="project" value="GO_Central"/>
</dbReference>
<dbReference type="Gene3D" id="3.90.470.20">
    <property type="entry name" value="4'-phosphopantetheinyl transferase domain"/>
    <property type="match status" value="1"/>
</dbReference>
<dbReference type="HAMAP" id="MF_00101">
    <property type="entry name" value="AcpS"/>
    <property type="match status" value="1"/>
</dbReference>
<dbReference type="InterPro" id="IPR008278">
    <property type="entry name" value="4-PPantetheinyl_Trfase_dom"/>
</dbReference>
<dbReference type="InterPro" id="IPR037143">
    <property type="entry name" value="4-PPantetheinyl_Trfase_dom_sf"/>
</dbReference>
<dbReference type="InterPro" id="IPR002582">
    <property type="entry name" value="ACPS"/>
</dbReference>
<dbReference type="InterPro" id="IPR050559">
    <property type="entry name" value="P-Pant_transferase_sf"/>
</dbReference>
<dbReference type="InterPro" id="IPR004568">
    <property type="entry name" value="Ppantetheine-prot_Trfase_dom"/>
</dbReference>
<dbReference type="NCBIfam" id="TIGR00516">
    <property type="entry name" value="acpS"/>
    <property type="match status" value="1"/>
</dbReference>
<dbReference type="NCBIfam" id="TIGR00556">
    <property type="entry name" value="pantethn_trn"/>
    <property type="match status" value="1"/>
</dbReference>
<dbReference type="PANTHER" id="PTHR12215:SF10">
    <property type="entry name" value="L-AMINOADIPATE-SEMIALDEHYDE DEHYDROGENASE-PHOSPHOPANTETHEINYL TRANSFERASE"/>
    <property type="match status" value="1"/>
</dbReference>
<dbReference type="PANTHER" id="PTHR12215">
    <property type="entry name" value="PHOSPHOPANTETHEINE TRANSFERASE"/>
    <property type="match status" value="1"/>
</dbReference>
<dbReference type="Pfam" id="PF01648">
    <property type="entry name" value="ACPS"/>
    <property type="match status" value="1"/>
</dbReference>
<dbReference type="SUPFAM" id="SSF56214">
    <property type="entry name" value="4'-phosphopantetheinyl transferase"/>
    <property type="match status" value="1"/>
</dbReference>
<proteinExistence type="evidence at protein level"/>
<accession>P96618</accession>
<gene>
    <name evidence="1" type="primary">acpS</name>
    <name type="synonym">ydcB</name>
    <name type="ordered locus">BSU04620</name>
</gene>
<protein>
    <recommendedName>
        <fullName evidence="1">Holo-[acyl-carrier-protein] synthase</fullName>
        <shortName evidence="1">Holo-ACP synthase</shortName>
        <ecNumber evidence="1">2.7.8.7</ecNumber>
    </recommendedName>
    <alternativeName>
        <fullName evidence="1">4'-phosphopantetheinyl transferase AcpS</fullName>
    </alternativeName>
</protein>
<sequence>MIYGIGLDITELKRIASMAGRQKRFAERILTRSELDQYYELSEKRKNEFLAGRFAAKEAFSKAFGTGIGRQLSFQDIEIRKDQNGKPYIICTKLSQAAVHVSITHTKEYAAAQVVIERLSS</sequence>